<keyword id="KW-0131">Cell cycle</keyword>
<keyword id="KW-0132">Cell division</keyword>
<keyword id="KW-1003">Cell membrane</keyword>
<keyword id="KW-0133">Cell shape</keyword>
<keyword id="KW-0961">Cell wall biogenesis/degradation</keyword>
<keyword id="KW-0460">Magnesium</keyword>
<keyword id="KW-0472">Membrane</keyword>
<keyword id="KW-0479">Metal-binding</keyword>
<keyword id="KW-0573">Peptidoglycan synthesis</keyword>
<keyword id="KW-0808">Transferase</keyword>
<keyword id="KW-0812">Transmembrane</keyword>
<keyword id="KW-1133">Transmembrane helix</keyword>
<gene>
    <name evidence="1" type="primary">mraY</name>
    <name type="ordered locus">Mjls_3270</name>
</gene>
<protein>
    <recommendedName>
        <fullName evidence="1">Phospho-N-acetylmuramoyl-pentapeptide-transferase</fullName>
        <ecNumber evidence="1">2.7.8.13</ecNumber>
    </recommendedName>
    <alternativeName>
        <fullName evidence="1">UDP-MurNAc-pentapeptide phosphotransferase</fullName>
    </alternativeName>
</protein>
<feature type="chain" id="PRO_1000003013" description="Phospho-N-acetylmuramoyl-pentapeptide-transferase">
    <location>
        <begin position="1"/>
        <end position="359"/>
    </location>
</feature>
<feature type="transmembrane region" description="Helical" evidence="1">
    <location>
        <begin position="3"/>
        <end position="23"/>
    </location>
</feature>
<feature type="transmembrane region" description="Helical" evidence="1">
    <location>
        <begin position="55"/>
        <end position="75"/>
    </location>
</feature>
<feature type="transmembrane region" description="Helical" evidence="1">
    <location>
        <begin position="84"/>
        <end position="104"/>
    </location>
</feature>
<feature type="transmembrane region" description="Helical" evidence="1">
    <location>
        <begin position="120"/>
        <end position="140"/>
    </location>
</feature>
<feature type="transmembrane region" description="Helical" evidence="1">
    <location>
        <begin position="156"/>
        <end position="176"/>
    </location>
</feature>
<feature type="transmembrane region" description="Helical" evidence="1">
    <location>
        <begin position="187"/>
        <end position="207"/>
    </location>
</feature>
<feature type="transmembrane region" description="Helical" evidence="1">
    <location>
        <begin position="231"/>
        <end position="251"/>
    </location>
</feature>
<feature type="transmembrane region" description="Helical" evidence="1">
    <location>
        <begin position="255"/>
        <end position="275"/>
    </location>
</feature>
<feature type="transmembrane region" description="Helical" evidence="1">
    <location>
        <begin position="280"/>
        <end position="300"/>
    </location>
</feature>
<feature type="transmembrane region" description="Helical" evidence="1">
    <location>
        <begin position="334"/>
        <end position="354"/>
    </location>
</feature>
<proteinExistence type="inferred from homology"/>
<organism>
    <name type="scientific">Mycobacterium sp. (strain JLS)</name>
    <dbReference type="NCBI Taxonomy" id="164757"/>
    <lineage>
        <taxon>Bacteria</taxon>
        <taxon>Bacillati</taxon>
        <taxon>Actinomycetota</taxon>
        <taxon>Actinomycetes</taxon>
        <taxon>Mycobacteriales</taxon>
        <taxon>Mycobacteriaceae</taxon>
        <taxon>Mycobacterium</taxon>
    </lineage>
</organism>
<accession>A3Q1M1</accession>
<comment type="function">
    <text evidence="1">Catalyzes the initial step of the lipid cycle reactions in the biosynthesis of the cell wall peptidoglycan: transfers peptidoglycan precursor phospho-MurNAc-pentapeptide from UDP-MurNAc-pentapeptide onto the lipid carrier undecaprenyl phosphate, yielding undecaprenyl-pyrophosphoryl-MurNAc-pentapeptide, known as lipid I.</text>
</comment>
<comment type="catalytic activity">
    <reaction evidence="1">
        <text>UDP-N-acetyl-alpha-D-muramoyl-L-alanyl-gamma-D-glutamyl-meso-2,6-diaminopimeloyl-D-alanyl-D-alanine + di-trans,octa-cis-undecaprenyl phosphate = di-trans,octa-cis-undecaprenyl diphospho-N-acetyl-alpha-D-muramoyl-L-alanyl-D-glutamyl-meso-2,6-diaminopimeloyl-D-alanyl-D-alanine + UMP</text>
        <dbReference type="Rhea" id="RHEA:28386"/>
        <dbReference type="ChEBI" id="CHEBI:57865"/>
        <dbReference type="ChEBI" id="CHEBI:60392"/>
        <dbReference type="ChEBI" id="CHEBI:61386"/>
        <dbReference type="ChEBI" id="CHEBI:61387"/>
        <dbReference type="EC" id="2.7.8.13"/>
    </reaction>
</comment>
<comment type="cofactor">
    <cofactor evidence="1">
        <name>Mg(2+)</name>
        <dbReference type="ChEBI" id="CHEBI:18420"/>
    </cofactor>
</comment>
<comment type="pathway">
    <text evidence="1">Cell wall biogenesis; peptidoglycan biosynthesis.</text>
</comment>
<comment type="subcellular location">
    <subcellularLocation>
        <location evidence="1">Cell membrane</location>
        <topology evidence="1">Multi-pass membrane protein</topology>
    </subcellularLocation>
</comment>
<comment type="similarity">
    <text evidence="1">Belongs to the glycosyltransferase 4 family. MraY subfamily.</text>
</comment>
<reference key="1">
    <citation type="submission" date="2007-02" db="EMBL/GenBank/DDBJ databases">
        <title>Complete sequence of Mycobacterium sp. JLS.</title>
        <authorList>
            <consortium name="US DOE Joint Genome Institute"/>
            <person name="Copeland A."/>
            <person name="Lucas S."/>
            <person name="Lapidus A."/>
            <person name="Barry K."/>
            <person name="Detter J.C."/>
            <person name="Glavina del Rio T."/>
            <person name="Hammon N."/>
            <person name="Israni S."/>
            <person name="Dalin E."/>
            <person name="Tice H."/>
            <person name="Pitluck S."/>
            <person name="Chain P."/>
            <person name="Malfatti S."/>
            <person name="Shin M."/>
            <person name="Vergez L."/>
            <person name="Schmutz J."/>
            <person name="Larimer F."/>
            <person name="Land M."/>
            <person name="Hauser L."/>
            <person name="Kyrpides N."/>
            <person name="Mikhailova N."/>
            <person name="Miller C.D."/>
            <person name="Anderson A.J."/>
            <person name="Sims R.C."/>
            <person name="Richardson P."/>
        </authorList>
    </citation>
    <scope>NUCLEOTIDE SEQUENCE [LARGE SCALE GENOMIC DNA]</scope>
    <source>
        <strain>JLS</strain>
    </source>
</reference>
<dbReference type="EC" id="2.7.8.13" evidence="1"/>
<dbReference type="EMBL" id="CP000580">
    <property type="protein sequence ID" value="ABN99048.1"/>
    <property type="molecule type" value="Genomic_DNA"/>
</dbReference>
<dbReference type="SMR" id="A3Q1M1"/>
<dbReference type="KEGG" id="mjl:Mjls_3270"/>
<dbReference type="HOGENOM" id="CLU_023982_0_1_11"/>
<dbReference type="BioCyc" id="MSP164757:G1G8C-3296-MONOMER"/>
<dbReference type="UniPathway" id="UPA00219"/>
<dbReference type="GO" id="GO:0005886">
    <property type="term" value="C:plasma membrane"/>
    <property type="evidence" value="ECO:0007669"/>
    <property type="project" value="UniProtKB-SubCell"/>
</dbReference>
<dbReference type="GO" id="GO:0046872">
    <property type="term" value="F:metal ion binding"/>
    <property type="evidence" value="ECO:0007669"/>
    <property type="project" value="UniProtKB-KW"/>
</dbReference>
<dbReference type="GO" id="GO:0008963">
    <property type="term" value="F:phospho-N-acetylmuramoyl-pentapeptide-transferase activity"/>
    <property type="evidence" value="ECO:0007669"/>
    <property type="project" value="UniProtKB-UniRule"/>
</dbReference>
<dbReference type="GO" id="GO:0051992">
    <property type="term" value="F:UDP-N-acetylmuramoyl-L-alanyl-D-glutamyl-meso-2,6-diaminopimelyl-D-alanyl-D-alanine:undecaprenyl-phosphate transferase activity"/>
    <property type="evidence" value="ECO:0007669"/>
    <property type="project" value="RHEA"/>
</dbReference>
<dbReference type="GO" id="GO:0051301">
    <property type="term" value="P:cell division"/>
    <property type="evidence" value="ECO:0007669"/>
    <property type="project" value="UniProtKB-KW"/>
</dbReference>
<dbReference type="GO" id="GO:0071555">
    <property type="term" value="P:cell wall organization"/>
    <property type="evidence" value="ECO:0007669"/>
    <property type="project" value="UniProtKB-KW"/>
</dbReference>
<dbReference type="GO" id="GO:0009252">
    <property type="term" value="P:peptidoglycan biosynthetic process"/>
    <property type="evidence" value="ECO:0007669"/>
    <property type="project" value="UniProtKB-UniRule"/>
</dbReference>
<dbReference type="GO" id="GO:0008360">
    <property type="term" value="P:regulation of cell shape"/>
    <property type="evidence" value="ECO:0007669"/>
    <property type="project" value="UniProtKB-KW"/>
</dbReference>
<dbReference type="CDD" id="cd06852">
    <property type="entry name" value="GT_MraY"/>
    <property type="match status" value="1"/>
</dbReference>
<dbReference type="HAMAP" id="MF_00038">
    <property type="entry name" value="MraY"/>
    <property type="match status" value="1"/>
</dbReference>
<dbReference type="InterPro" id="IPR000715">
    <property type="entry name" value="Glycosyl_transferase_4"/>
</dbReference>
<dbReference type="InterPro" id="IPR003524">
    <property type="entry name" value="PNAcMuramoyl-5peptid_Trfase"/>
</dbReference>
<dbReference type="InterPro" id="IPR018480">
    <property type="entry name" value="PNAcMuramoyl-5peptid_Trfase_CS"/>
</dbReference>
<dbReference type="NCBIfam" id="TIGR00445">
    <property type="entry name" value="mraY"/>
    <property type="match status" value="1"/>
</dbReference>
<dbReference type="PANTHER" id="PTHR22926">
    <property type="entry name" value="PHOSPHO-N-ACETYLMURAMOYL-PENTAPEPTIDE-TRANSFERASE"/>
    <property type="match status" value="1"/>
</dbReference>
<dbReference type="PANTHER" id="PTHR22926:SF5">
    <property type="entry name" value="PHOSPHO-N-ACETYLMURAMOYL-PENTAPEPTIDE-TRANSFERASE HOMOLOG"/>
    <property type="match status" value="1"/>
</dbReference>
<dbReference type="Pfam" id="PF00953">
    <property type="entry name" value="Glycos_transf_4"/>
    <property type="match status" value="1"/>
</dbReference>
<dbReference type="Pfam" id="PF10555">
    <property type="entry name" value="MraY_sig1"/>
    <property type="match status" value="1"/>
</dbReference>
<dbReference type="PROSITE" id="PS01347">
    <property type="entry name" value="MRAY_1"/>
    <property type="match status" value="1"/>
</dbReference>
<dbReference type="PROSITE" id="PS01348">
    <property type="entry name" value="MRAY_2"/>
    <property type="match status" value="1"/>
</dbReference>
<sequence length="359" mass="37667">MRQILIAVGLALAVSILLTPVLIRLFTRQGFGHEIREDGPPTHHKKRGTPSMGGVAILAGIWVSYLGTHLVGLALDGEGPSASGLLVLGLATALGIVGFIDDLIKIRRARNLGLNKTAKTVGILAAALLFGVLALQFGNADGLTPGSPELSYVREIATVTLAPLIFVLFCVVLVSAWSNAVNFTDGLDGLAAGAMAMVCAAYVLITFWQYRNACATSPGLGCYNVRDPLDLALVAAAAAGACIGFLWWNAAPAKIFMGDTGSLALGGIIAGLSVTSRTEILAVVLGALFVAEVTSVVVQILAFRTTGRRVFRMAPFHHHFELVGWAETTVIIRFWLLTAIACGLGVALFYGEWLTAVGA</sequence>
<evidence type="ECO:0000255" key="1">
    <source>
        <dbReference type="HAMAP-Rule" id="MF_00038"/>
    </source>
</evidence>
<name>MRAY_MYCSJ</name>